<reference key="1">
    <citation type="submission" date="2008-02" db="EMBL/GenBank/DDBJ databases">
        <title>Complete sequence of Haemophilus somnus 2336.</title>
        <authorList>
            <consortium name="US DOE Joint Genome Institute"/>
            <person name="Siddaramappa S."/>
            <person name="Duncan A.J."/>
            <person name="Challacombe J.F."/>
            <person name="Rainey D."/>
            <person name="Gillaspy A.F."/>
            <person name="Carson M."/>
            <person name="Gipson J."/>
            <person name="Gipson M."/>
            <person name="Bruce D."/>
            <person name="Detter J.C."/>
            <person name="Han C.S."/>
            <person name="Land M."/>
            <person name="Tapia R."/>
            <person name="Thompson L.S."/>
            <person name="Orvis J."/>
            <person name="Zaitshik J."/>
            <person name="Barnes G."/>
            <person name="Brettin T.S."/>
            <person name="Dyer D.W."/>
            <person name="Inzana T.J."/>
        </authorList>
    </citation>
    <scope>NUCLEOTIDE SEQUENCE [LARGE SCALE GENOMIC DNA]</scope>
    <source>
        <strain>2336</strain>
    </source>
</reference>
<sequence>MDLLQQLQNQLNQFPSHTKLLLGFSGGLDSTVLLSLLAKLRKKQPHLSLRAIHIHHGLSQNADNWAIHCRQICQQLDISFLCEKVTINPRKGIEADAREARYQAIANHLQDNEILVTAHHQQDQTETFLLALKRGSGLQGLGAMQIQSVVFNLPIFRPLLHCTKQQLEQYAKTEKLSWIEDESNADNRYERNFLRNDILPKLRQRWQSIDNAVQRSAQHCFEQQQLINELLNDEFNKIYDKFDRTLSIANFATYSILKQKALLRTWLQHLHILMPSTIQLDNIMRNMIQAQEDRNPTCRLGNQVLRRYQKRLYATPILQDLSHIRLDIQANECINLPDNLGEICLLTKNEHLQVTWQNKQILLPLTQEKIEIRFRYSGKVKLPQGFHQEMKKCWQDHNVPVWQRTRIPLIFYGNKFKSAVGFFNNCE</sequence>
<dbReference type="EC" id="6.3.4.19" evidence="1"/>
<dbReference type="EMBL" id="CP000947">
    <property type="protein sequence ID" value="ACA31155.1"/>
    <property type="molecule type" value="Genomic_DNA"/>
</dbReference>
<dbReference type="RefSeq" id="WP_012340560.1">
    <property type="nucleotide sequence ID" value="NC_010519.1"/>
</dbReference>
<dbReference type="SMR" id="B0UUD3"/>
<dbReference type="STRING" id="228400.HSM_1412"/>
<dbReference type="GeneID" id="31487710"/>
<dbReference type="KEGG" id="hsm:HSM_1412"/>
<dbReference type="HOGENOM" id="CLU_018869_2_0_6"/>
<dbReference type="GO" id="GO:0005737">
    <property type="term" value="C:cytoplasm"/>
    <property type="evidence" value="ECO:0007669"/>
    <property type="project" value="UniProtKB-SubCell"/>
</dbReference>
<dbReference type="GO" id="GO:0005524">
    <property type="term" value="F:ATP binding"/>
    <property type="evidence" value="ECO:0007669"/>
    <property type="project" value="UniProtKB-UniRule"/>
</dbReference>
<dbReference type="GO" id="GO:0032267">
    <property type="term" value="F:tRNA(Ile)-lysidine synthase activity"/>
    <property type="evidence" value="ECO:0007669"/>
    <property type="project" value="UniProtKB-EC"/>
</dbReference>
<dbReference type="GO" id="GO:0006400">
    <property type="term" value="P:tRNA modification"/>
    <property type="evidence" value="ECO:0007669"/>
    <property type="project" value="UniProtKB-UniRule"/>
</dbReference>
<dbReference type="CDD" id="cd01992">
    <property type="entry name" value="TilS_N"/>
    <property type="match status" value="1"/>
</dbReference>
<dbReference type="Gene3D" id="1.20.59.20">
    <property type="match status" value="1"/>
</dbReference>
<dbReference type="Gene3D" id="3.40.50.620">
    <property type="entry name" value="HUPs"/>
    <property type="match status" value="1"/>
</dbReference>
<dbReference type="HAMAP" id="MF_01161">
    <property type="entry name" value="tRNA_Ile_lys_synt"/>
    <property type="match status" value="1"/>
</dbReference>
<dbReference type="InterPro" id="IPR012796">
    <property type="entry name" value="Lysidine-tRNA-synth_C"/>
</dbReference>
<dbReference type="InterPro" id="IPR014729">
    <property type="entry name" value="Rossmann-like_a/b/a_fold"/>
</dbReference>
<dbReference type="InterPro" id="IPR011063">
    <property type="entry name" value="TilS/TtcA_N"/>
</dbReference>
<dbReference type="InterPro" id="IPR012094">
    <property type="entry name" value="tRNA_Ile_lys_synt"/>
</dbReference>
<dbReference type="InterPro" id="IPR012795">
    <property type="entry name" value="tRNA_Ile_lys_synt_N"/>
</dbReference>
<dbReference type="InterPro" id="IPR015262">
    <property type="entry name" value="tRNA_Ile_lys_synt_subst-bd"/>
</dbReference>
<dbReference type="NCBIfam" id="TIGR02433">
    <property type="entry name" value="lysidine_TilS_C"/>
    <property type="match status" value="1"/>
</dbReference>
<dbReference type="NCBIfam" id="TIGR02432">
    <property type="entry name" value="lysidine_TilS_N"/>
    <property type="match status" value="1"/>
</dbReference>
<dbReference type="PANTHER" id="PTHR43033">
    <property type="entry name" value="TRNA(ILE)-LYSIDINE SYNTHASE-RELATED"/>
    <property type="match status" value="1"/>
</dbReference>
<dbReference type="PANTHER" id="PTHR43033:SF1">
    <property type="entry name" value="TRNA(ILE)-LYSIDINE SYNTHASE-RELATED"/>
    <property type="match status" value="1"/>
</dbReference>
<dbReference type="Pfam" id="PF01171">
    <property type="entry name" value="ATP_bind_3"/>
    <property type="match status" value="1"/>
</dbReference>
<dbReference type="Pfam" id="PF09179">
    <property type="entry name" value="TilS"/>
    <property type="match status" value="1"/>
</dbReference>
<dbReference type="Pfam" id="PF11734">
    <property type="entry name" value="TilS_C"/>
    <property type="match status" value="1"/>
</dbReference>
<dbReference type="SMART" id="SM00977">
    <property type="entry name" value="TilS_C"/>
    <property type="match status" value="1"/>
</dbReference>
<dbReference type="SUPFAM" id="SSF52402">
    <property type="entry name" value="Adenine nucleotide alpha hydrolases-like"/>
    <property type="match status" value="1"/>
</dbReference>
<dbReference type="SUPFAM" id="SSF82829">
    <property type="entry name" value="MesJ substrate recognition domain-like"/>
    <property type="match status" value="1"/>
</dbReference>
<dbReference type="SUPFAM" id="SSF56037">
    <property type="entry name" value="PheT/TilS domain"/>
    <property type="match status" value="1"/>
</dbReference>
<protein>
    <recommendedName>
        <fullName evidence="1">tRNA(Ile)-lysidine synthase</fullName>
        <ecNumber evidence="1">6.3.4.19</ecNumber>
    </recommendedName>
    <alternativeName>
        <fullName evidence="1">tRNA(Ile)-2-lysyl-cytidine synthase</fullName>
    </alternativeName>
    <alternativeName>
        <fullName evidence="1">tRNA(Ile)-lysidine synthetase</fullName>
    </alternativeName>
</protein>
<gene>
    <name evidence="1" type="primary">tilS</name>
    <name type="ordered locus">HSM_1412</name>
</gene>
<name>TILS_HISS2</name>
<proteinExistence type="inferred from homology"/>
<accession>B0UUD3</accession>
<comment type="function">
    <text evidence="1">Ligates lysine onto the cytidine present at position 34 of the AUA codon-specific tRNA(Ile) that contains the anticodon CAU, in an ATP-dependent manner. Cytidine is converted to lysidine, thus changing the amino acid specificity of the tRNA from methionine to isoleucine.</text>
</comment>
<comment type="catalytic activity">
    <reaction evidence="1">
        <text>cytidine(34) in tRNA(Ile2) + L-lysine + ATP = lysidine(34) in tRNA(Ile2) + AMP + diphosphate + H(+)</text>
        <dbReference type="Rhea" id="RHEA:43744"/>
        <dbReference type="Rhea" id="RHEA-COMP:10625"/>
        <dbReference type="Rhea" id="RHEA-COMP:10670"/>
        <dbReference type="ChEBI" id="CHEBI:15378"/>
        <dbReference type="ChEBI" id="CHEBI:30616"/>
        <dbReference type="ChEBI" id="CHEBI:32551"/>
        <dbReference type="ChEBI" id="CHEBI:33019"/>
        <dbReference type="ChEBI" id="CHEBI:82748"/>
        <dbReference type="ChEBI" id="CHEBI:83665"/>
        <dbReference type="ChEBI" id="CHEBI:456215"/>
        <dbReference type="EC" id="6.3.4.19"/>
    </reaction>
</comment>
<comment type="subcellular location">
    <subcellularLocation>
        <location evidence="1">Cytoplasm</location>
    </subcellularLocation>
</comment>
<comment type="domain">
    <text>The N-terminal region contains the highly conserved SGGXDS motif, predicted to be a P-loop motif involved in ATP binding.</text>
</comment>
<comment type="similarity">
    <text evidence="1">Belongs to the tRNA(Ile)-lysidine synthase family.</text>
</comment>
<organism>
    <name type="scientific">Histophilus somni (strain 2336)</name>
    <name type="common">Haemophilus somnus</name>
    <dbReference type="NCBI Taxonomy" id="228400"/>
    <lineage>
        <taxon>Bacteria</taxon>
        <taxon>Pseudomonadati</taxon>
        <taxon>Pseudomonadota</taxon>
        <taxon>Gammaproteobacteria</taxon>
        <taxon>Pasteurellales</taxon>
        <taxon>Pasteurellaceae</taxon>
        <taxon>Histophilus</taxon>
    </lineage>
</organism>
<evidence type="ECO:0000255" key="1">
    <source>
        <dbReference type="HAMAP-Rule" id="MF_01161"/>
    </source>
</evidence>
<feature type="chain" id="PRO_1000137872" description="tRNA(Ile)-lysidine synthase">
    <location>
        <begin position="1"/>
        <end position="427"/>
    </location>
</feature>
<feature type="binding site" evidence="1">
    <location>
        <begin position="25"/>
        <end position="30"/>
    </location>
    <ligand>
        <name>ATP</name>
        <dbReference type="ChEBI" id="CHEBI:30616"/>
    </ligand>
</feature>
<keyword id="KW-0067">ATP-binding</keyword>
<keyword id="KW-0963">Cytoplasm</keyword>
<keyword id="KW-0436">Ligase</keyword>
<keyword id="KW-0547">Nucleotide-binding</keyword>
<keyword id="KW-0819">tRNA processing</keyword>